<gene>
    <name evidence="1" type="primary">kdpA</name>
    <name type="ordered locus">Bind_1096</name>
</gene>
<comment type="function">
    <text evidence="1">Part of the high-affinity ATP-driven potassium transport (or Kdp) system, which catalyzes the hydrolysis of ATP coupled with the electrogenic transport of potassium into the cytoplasm. This subunit binds the periplasmic potassium ions and delivers the ions to the membrane domain of KdpB through an intramembrane tunnel.</text>
</comment>
<comment type="subunit">
    <text evidence="1">The system is composed of three essential subunits: KdpA, KdpB and KdpC.</text>
</comment>
<comment type="subcellular location">
    <subcellularLocation>
        <location evidence="1">Cell inner membrane</location>
        <topology evidence="1">Multi-pass membrane protein</topology>
    </subcellularLocation>
</comment>
<comment type="similarity">
    <text evidence="1">Belongs to the KdpA family.</text>
</comment>
<organism>
    <name type="scientific">Beijerinckia indica subsp. indica (strain ATCC 9039 / DSM 1715 / NCIMB 8712)</name>
    <dbReference type="NCBI Taxonomy" id="395963"/>
    <lineage>
        <taxon>Bacteria</taxon>
        <taxon>Pseudomonadati</taxon>
        <taxon>Pseudomonadota</taxon>
        <taxon>Alphaproteobacteria</taxon>
        <taxon>Hyphomicrobiales</taxon>
        <taxon>Beijerinckiaceae</taxon>
        <taxon>Beijerinckia</taxon>
    </lineage>
</organism>
<dbReference type="EMBL" id="CP001016">
    <property type="protein sequence ID" value="ACB94738.1"/>
    <property type="molecule type" value="Genomic_DNA"/>
</dbReference>
<dbReference type="RefSeq" id="WP_012384095.1">
    <property type="nucleotide sequence ID" value="NC_010581.1"/>
</dbReference>
<dbReference type="SMR" id="B2IIP5"/>
<dbReference type="STRING" id="395963.Bind_1096"/>
<dbReference type="KEGG" id="bid:Bind_1096"/>
<dbReference type="eggNOG" id="COG2060">
    <property type="taxonomic scope" value="Bacteria"/>
</dbReference>
<dbReference type="HOGENOM" id="CLU_018614_3_0_5"/>
<dbReference type="OrthoDB" id="9763796at2"/>
<dbReference type="Proteomes" id="UP000001695">
    <property type="component" value="Chromosome"/>
</dbReference>
<dbReference type="GO" id="GO:0005886">
    <property type="term" value="C:plasma membrane"/>
    <property type="evidence" value="ECO:0007669"/>
    <property type="project" value="UniProtKB-SubCell"/>
</dbReference>
<dbReference type="GO" id="GO:0008556">
    <property type="term" value="F:P-type potassium transmembrane transporter activity"/>
    <property type="evidence" value="ECO:0007669"/>
    <property type="project" value="InterPro"/>
</dbReference>
<dbReference type="GO" id="GO:0030955">
    <property type="term" value="F:potassium ion binding"/>
    <property type="evidence" value="ECO:0007669"/>
    <property type="project" value="UniProtKB-UniRule"/>
</dbReference>
<dbReference type="HAMAP" id="MF_00275">
    <property type="entry name" value="KdpA"/>
    <property type="match status" value="1"/>
</dbReference>
<dbReference type="InterPro" id="IPR004623">
    <property type="entry name" value="KdpA"/>
</dbReference>
<dbReference type="NCBIfam" id="TIGR00680">
    <property type="entry name" value="kdpA"/>
    <property type="match status" value="1"/>
</dbReference>
<dbReference type="PANTHER" id="PTHR30607">
    <property type="entry name" value="POTASSIUM-TRANSPORTING ATPASE A CHAIN"/>
    <property type="match status" value="1"/>
</dbReference>
<dbReference type="PANTHER" id="PTHR30607:SF2">
    <property type="entry name" value="POTASSIUM-TRANSPORTING ATPASE POTASSIUM-BINDING SUBUNIT"/>
    <property type="match status" value="1"/>
</dbReference>
<dbReference type="Pfam" id="PF03814">
    <property type="entry name" value="KdpA"/>
    <property type="match status" value="1"/>
</dbReference>
<dbReference type="PIRSF" id="PIRSF001294">
    <property type="entry name" value="K_ATPaseA"/>
    <property type="match status" value="1"/>
</dbReference>
<sequence>MNWQGWAEIAFILGLTVALGWPLGLFLARLWEGEQTWLDPVLKPVERLVYRACGIDPRQSQTWSSYALALLAFSAASFILLYAILRLQGWLPLNPQGFAGLPPHLAFNTAISFVSNTNWQSYVPEATVSAFSQMAGLTSHNFLSAAAGIAVAAAVTRAFAANREEGLGNFWVDLTRVSLYLLLPLSIVIALVFVALGEPQTLSAHVTATTLEGVQQTIALFPTASQEAIKQLGTNGGGIFNANSAHPFENPNPLTNLIEIVEMNVLGFACVVAFGRLVSARRDARALITVMAIFVAVAASVIYWTETRPAPALVGAQAEASVNMEGKEVRFGAPATAIWTAATTGASDGGVNAMFDSFMPLGGGMAMFMIQLGEILPGGVGSGLYGMIVLALIAVFVAGLMVGRTPEYLGKKVEAREVKYAMLAVLILPLAILGFSAAAAVLPVALEGLANTGAHGLSEILYAYSSATGNNGSAFAGFSANTPWWNTTLGIAMLLGRFGYVIPVLAIAGSLAAKPKLTVTAGTFPTDGPLFIGLLIGVILILGGLQFFPALALGPIVEHFQVLQALAR</sequence>
<accession>B2IIP5</accession>
<proteinExistence type="inferred from homology"/>
<evidence type="ECO:0000255" key="1">
    <source>
        <dbReference type="HAMAP-Rule" id="MF_00275"/>
    </source>
</evidence>
<keyword id="KW-0997">Cell inner membrane</keyword>
<keyword id="KW-1003">Cell membrane</keyword>
<keyword id="KW-0406">Ion transport</keyword>
<keyword id="KW-0472">Membrane</keyword>
<keyword id="KW-0630">Potassium</keyword>
<keyword id="KW-0633">Potassium transport</keyword>
<keyword id="KW-1185">Reference proteome</keyword>
<keyword id="KW-0812">Transmembrane</keyword>
<keyword id="KW-1133">Transmembrane helix</keyword>
<keyword id="KW-0813">Transport</keyword>
<protein>
    <recommendedName>
        <fullName evidence="1">Potassium-transporting ATPase potassium-binding subunit</fullName>
    </recommendedName>
    <alternativeName>
        <fullName evidence="1">ATP phosphohydrolase [potassium-transporting] A chain</fullName>
    </alternativeName>
    <alternativeName>
        <fullName evidence="1">Potassium-binding and translocating subunit A</fullName>
    </alternativeName>
    <alternativeName>
        <fullName evidence="1">Potassium-translocating ATPase A chain</fullName>
    </alternativeName>
</protein>
<name>KDPA_BEII9</name>
<feature type="chain" id="PRO_1000114674" description="Potassium-transporting ATPase potassium-binding subunit">
    <location>
        <begin position="1"/>
        <end position="568"/>
    </location>
</feature>
<feature type="transmembrane region" description="Helical" evidence="1">
    <location>
        <begin position="7"/>
        <end position="27"/>
    </location>
</feature>
<feature type="transmembrane region" description="Helical" evidence="1">
    <location>
        <begin position="65"/>
        <end position="85"/>
    </location>
</feature>
<feature type="transmembrane region" description="Helical" evidence="1">
    <location>
        <begin position="135"/>
        <end position="155"/>
    </location>
</feature>
<feature type="transmembrane region" description="Helical" evidence="1">
    <location>
        <begin position="177"/>
        <end position="197"/>
    </location>
</feature>
<feature type="transmembrane region" description="Helical" evidence="1">
    <location>
        <begin position="254"/>
        <end position="274"/>
    </location>
</feature>
<feature type="transmembrane region" description="Helical" evidence="1">
    <location>
        <begin position="286"/>
        <end position="306"/>
    </location>
</feature>
<feature type="transmembrane region" description="Helical" evidence="1">
    <location>
        <begin position="383"/>
        <end position="403"/>
    </location>
</feature>
<feature type="transmembrane region" description="Helical" evidence="1">
    <location>
        <begin position="422"/>
        <end position="442"/>
    </location>
</feature>
<feature type="transmembrane region" description="Helical" evidence="1">
    <location>
        <begin position="489"/>
        <end position="509"/>
    </location>
</feature>
<feature type="transmembrane region" description="Helical" evidence="1">
    <location>
        <begin position="530"/>
        <end position="550"/>
    </location>
</feature>
<reference key="1">
    <citation type="journal article" date="2010" name="J. Bacteriol.">
        <title>Complete genome sequence of Beijerinckia indica subsp. indica.</title>
        <authorList>
            <person name="Tamas I."/>
            <person name="Dedysh S.N."/>
            <person name="Liesack W."/>
            <person name="Stott M.B."/>
            <person name="Alam M."/>
            <person name="Murrell J.C."/>
            <person name="Dunfield P.F."/>
        </authorList>
    </citation>
    <scope>NUCLEOTIDE SEQUENCE [LARGE SCALE GENOMIC DNA]</scope>
    <source>
        <strain>ATCC 9039 / DSM 1715 / NCIMB 8712</strain>
    </source>
</reference>